<name>NRDR_METC4</name>
<accession>B7KUT4</accession>
<protein>
    <recommendedName>
        <fullName evidence="1">Transcriptional repressor NrdR</fullName>
    </recommendedName>
</protein>
<comment type="function">
    <text evidence="1">Negatively regulates transcription of bacterial ribonucleotide reductase nrd genes and operons by binding to NrdR-boxes.</text>
</comment>
<comment type="cofactor">
    <cofactor evidence="1">
        <name>Zn(2+)</name>
        <dbReference type="ChEBI" id="CHEBI:29105"/>
    </cofactor>
    <text evidence="1">Binds 1 zinc ion.</text>
</comment>
<comment type="similarity">
    <text evidence="1">Belongs to the NrdR family.</text>
</comment>
<reference key="1">
    <citation type="submission" date="2008-12" db="EMBL/GenBank/DDBJ databases">
        <title>Complete sequence of chromosome of Methylobacterium chloromethanicum CM4.</title>
        <authorList>
            <consortium name="US DOE Joint Genome Institute"/>
            <person name="Lucas S."/>
            <person name="Copeland A."/>
            <person name="Lapidus A."/>
            <person name="Glavina del Rio T."/>
            <person name="Dalin E."/>
            <person name="Tice H."/>
            <person name="Bruce D."/>
            <person name="Goodwin L."/>
            <person name="Pitluck S."/>
            <person name="Chertkov O."/>
            <person name="Brettin T."/>
            <person name="Detter J.C."/>
            <person name="Han C."/>
            <person name="Larimer F."/>
            <person name="Land M."/>
            <person name="Hauser L."/>
            <person name="Kyrpides N."/>
            <person name="Mikhailova N."/>
            <person name="Marx C."/>
            <person name="Richardson P."/>
        </authorList>
    </citation>
    <scope>NUCLEOTIDE SEQUENCE [LARGE SCALE GENOMIC DNA]</scope>
    <source>
        <strain>CM4 / NCIMB 13688</strain>
    </source>
</reference>
<sequence>MRCPFCGGPDTQVKDSRPSEDSSAIRRRRVCPDCGGRFTTFERVQLRELVVLKRSGKRVPFDRDKLQRSIDVALRKRTVDPERVERLVSGITRRLESGGEGEVTSEAIGEAVMEGLKGLDDVAYVRFASVYKNFREAQDFQDLLGTLGERLDGEGDLPEQGDAVPAPPDEAVAAPRRGRPARKRA</sequence>
<proteinExistence type="inferred from homology"/>
<keyword id="KW-0067">ATP-binding</keyword>
<keyword id="KW-0238">DNA-binding</keyword>
<keyword id="KW-0479">Metal-binding</keyword>
<keyword id="KW-0547">Nucleotide-binding</keyword>
<keyword id="KW-0678">Repressor</keyword>
<keyword id="KW-0804">Transcription</keyword>
<keyword id="KW-0805">Transcription regulation</keyword>
<keyword id="KW-0862">Zinc</keyword>
<keyword id="KW-0863">Zinc-finger</keyword>
<dbReference type="EMBL" id="CP001298">
    <property type="protein sequence ID" value="ACK84313.1"/>
    <property type="molecule type" value="Genomic_DNA"/>
</dbReference>
<dbReference type="RefSeq" id="WP_015951600.1">
    <property type="nucleotide sequence ID" value="NC_011757.1"/>
</dbReference>
<dbReference type="SMR" id="B7KUT4"/>
<dbReference type="KEGG" id="mch:Mchl_3493"/>
<dbReference type="HOGENOM" id="CLU_108412_0_1_5"/>
<dbReference type="Proteomes" id="UP000002385">
    <property type="component" value="Chromosome"/>
</dbReference>
<dbReference type="GO" id="GO:0005524">
    <property type="term" value="F:ATP binding"/>
    <property type="evidence" value="ECO:0007669"/>
    <property type="project" value="UniProtKB-KW"/>
</dbReference>
<dbReference type="GO" id="GO:0003677">
    <property type="term" value="F:DNA binding"/>
    <property type="evidence" value="ECO:0007669"/>
    <property type="project" value="UniProtKB-KW"/>
</dbReference>
<dbReference type="GO" id="GO:0008270">
    <property type="term" value="F:zinc ion binding"/>
    <property type="evidence" value="ECO:0007669"/>
    <property type="project" value="UniProtKB-UniRule"/>
</dbReference>
<dbReference type="GO" id="GO:0045892">
    <property type="term" value="P:negative regulation of DNA-templated transcription"/>
    <property type="evidence" value="ECO:0007669"/>
    <property type="project" value="UniProtKB-UniRule"/>
</dbReference>
<dbReference type="HAMAP" id="MF_00440">
    <property type="entry name" value="NrdR"/>
    <property type="match status" value="1"/>
</dbReference>
<dbReference type="InterPro" id="IPR005144">
    <property type="entry name" value="ATP-cone_dom"/>
</dbReference>
<dbReference type="InterPro" id="IPR055173">
    <property type="entry name" value="NrdR-like_N"/>
</dbReference>
<dbReference type="InterPro" id="IPR003796">
    <property type="entry name" value="RNR_NrdR-like"/>
</dbReference>
<dbReference type="NCBIfam" id="TIGR00244">
    <property type="entry name" value="transcriptional regulator NrdR"/>
    <property type="match status" value="1"/>
</dbReference>
<dbReference type="PANTHER" id="PTHR30455">
    <property type="entry name" value="TRANSCRIPTIONAL REPRESSOR NRDR"/>
    <property type="match status" value="1"/>
</dbReference>
<dbReference type="PANTHER" id="PTHR30455:SF2">
    <property type="entry name" value="TRANSCRIPTIONAL REPRESSOR NRDR"/>
    <property type="match status" value="1"/>
</dbReference>
<dbReference type="Pfam" id="PF03477">
    <property type="entry name" value="ATP-cone"/>
    <property type="match status" value="1"/>
</dbReference>
<dbReference type="Pfam" id="PF22811">
    <property type="entry name" value="Zn_ribbon_NrdR"/>
    <property type="match status" value="1"/>
</dbReference>
<dbReference type="PROSITE" id="PS51161">
    <property type="entry name" value="ATP_CONE"/>
    <property type="match status" value="1"/>
</dbReference>
<gene>
    <name evidence="1" type="primary">nrdR</name>
    <name type="ordered locus">Mchl_3493</name>
</gene>
<evidence type="ECO:0000255" key="1">
    <source>
        <dbReference type="HAMAP-Rule" id="MF_00440"/>
    </source>
</evidence>
<evidence type="ECO:0000256" key="2">
    <source>
        <dbReference type="SAM" id="MobiDB-lite"/>
    </source>
</evidence>
<feature type="chain" id="PRO_1000191803" description="Transcriptional repressor NrdR">
    <location>
        <begin position="1"/>
        <end position="185"/>
    </location>
</feature>
<feature type="domain" description="ATP-cone" evidence="1">
    <location>
        <begin position="49"/>
        <end position="139"/>
    </location>
</feature>
<feature type="zinc finger region" evidence="1">
    <location>
        <begin position="3"/>
        <end position="34"/>
    </location>
</feature>
<feature type="region of interest" description="Disordered" evidence="2">
    <location>
        <begin position="1"/>
        <end position="24"/>
    </location>
</feature>
<feature type="region of interest" description="Disordered" evidence="2">
    <location>
        <begin position="148"/>
        <end position="185"/>
    </location>
</feature>
<feature type="compositionally biased region" description="Basic and acidic residues" evidence="2">
    <location>
        <begin position="12"/>
        <end position="24"/>
    </location>
</feature>
<feature type="compositionally biased region" description="Basic residues" evidence="2">
    <location>
        <begin position="176"/>
        <end position="185"/>
    </location>
</feature>
<organism>
    <name type="scientific">Methylorubrum extorquens (strain CM4 / NCIMB 13688)</name>
    <name type="common">Methylobacterium extorquens</name>
    <dbReference type="NCBI Taxonomy" id="440085"/>
    <lineage>
        <taxon>Bacteria</taxon>
        <taxon>Pseudomonadati</taxon>
        <taxon>Pseudomonadota</taxon>
        <taxon>Alphaproteobacteria</taxon>
        <taxon>Hyphomicrobiales</taxon>
        <taxon>Methylobacteriaceae</taxon>
        <taxon>Methylorubrum</taxon>
    </lineage>
</organism>